<reference key="1">
    <citation type="journal article" date="2002" name="Proc. Natl. Acad. Sci. U.S.A.">
        <title>The Brucella suis genome reveals fundamental similarities between animal and plant pathogens and symbionts.</title>
        <authorList>
            <person name="Paulsen I.T."/>
            <person name="Seshadri R."/>
            <person name="Nelson K.E."/>
            <person name="Eisen J.A."/>
            <person name="Heidelberg J.F."/>
            <person name="Read T.D."/>
            <person name="Dodson R.J."/>
            <person name="Umayam L.A."/>
            <person name="Brinkac L.M."/>
            <person name="Beanan M.J."/>
            <person name="Daugherty S.C."/>
            <person name="DeBoy R.T."/>
            <person name="Durkin A.S."/>
            <person name="Kolonay J.F."/>
            <person name="Madupu R."/>
            <person name="Nelson W.C."/>
            <person name="Ayodeji B."/>
            <person name="Kraul M."/>
            <person name="Shetty J."/>
            <person name="Malek J.A."/>
            <person name="Van Aken S.E."/>
            <person name="Riedmuller S."/>
            <person name="Tettelin H."/>
            <person name="Gill S.R."/>
            <person name="White O."/>
            <person name="Salzberg S.L."/>
            <person name="Hoover D.L."/>
            <person name="Lindler L.E."/>
            <person name="Halling S.M."/>
            <person name="Boyle S.M."/>
            <person name="Fraser C.M."/>
        </authorList>
    </citation>
    <scope>NUCLEOTIDE SEQUENCE [LARGE SCALE GENOMIC DNA]</scope>
    <source>
        <strain>1330</strain>
    </source>
</reference>
<reference key="2">
    <citation type="journal article" date="2011" name="J. Bacteriol.">
        <title>Revised genome sequence of Brucella suis 1330.</title>
        <authorList>
            <person name="Tae H."/>
            <person name="Shallom S."/>
            <person name="Settlage R."/>
            <person name="Preston D."/>
            <person name="Adams L.G."/>
            <person name="Garner H.R."/>
        </authorList>
    </citation>
    <scope>NUCLEOTIDE SEQUENCE [LARGE SCALE GENOMIC DNA]</scope>
    <source>
        <strain>1330</strain>
    </source>
</reference>
<name>FMT_BRUSU</name>
<protein>
    <recommendedName>
        <fullName evidence="1">Methionyl-tRNA formyltransferase</fullName>
        <ecNumber evidence="1">2.1.2.9</ecNumber>
    </recommendedName>
</protein>
<sequence length="306" mass="32772">MRVVFMGTPEFSVPILTAIIGHGYEVVAAYTQPPRPAGRRGLELTRSPVHEKAEQFGIPVFTPKSLKGAEEQDVFASLEADVAIVVAYGLLLPKAILDAPRLGCYNGHASLLPRWRGAAPIQRAIMAGDAETGMMIMKMDEGLDTGPVAMAEKVAITPDMTAGELHDRLSMIGADLMIRALGALERESLALQPQAEEGVTYAAKIDKAEARIDWSKPAKDVHNSIRGLSPFPGAWCEMEINGAVERVKLQRSTLGEGSGAPGTVLDDRLTIACGEGAVRLATLQRSGGKPLPAQEFLRGQRVTKVL</sequence>
<organism>
    <name type="scientific">Brucella suis biovar 1 (strain 1330)</name>
    <dbReference type="NCBI Taxonomy" id="204722"/>
    <lineage>
        <taxon>Bacteria</taxon>
        <taxon>Pseudomonadati</taxon>
        <taxon>Pseudomonadota</taxon>
        <taxon>Alphaproteobacteria</taxon>
        <taxon>Hyphomicrobiales</taxon>
        <taxon>Brucellaceae</taxon>
        <taxon>Brucella/Ochrobactrum group</taxon>
        <taxon>Brucella</taxon>
    </lineage>
</organism>
<proteinExistence type="inferred from homology"/>
<evidence type="ECO:0000255" key="1">
    <source>
        <dbReference type="HAMAP-Rule" id="MF_00182"/>
    </source>
</evidence>
<dbReference type="EC" id="2.1.2.9" evidence="1"/>
<dbReference type="EMBL" id="AE014292">
    <property type="protein sequence ID" value="AAN34201.1"/>
    <property type="molecule type" value="Genomic_DNA"/>
</dbReference>
<dbReference type="EMBL" id="CP002998">
    <property type="protein sequence ID" value="AEM20478.1"/>
    <property type="molecule type" value="Genomic_DNA"/>
</dbReference>
<dbReference type="RefSeq" id="WP_004682455.1">
    <property type="nucleotide sequence ID" value="NZ_KN046805.1"/>
</dbReference>
<dbReference type="SMR" id="P64133"/>
<dbReference type="GeneID" id="55592657"/>
<dbReference type="KEGG" id="bms:BRA1034"/>
<dbReference type="KEGG" id="bsi:BS1330_II1026"/>
<dbReference type="PATRIC" id="fig|204722.21.peg.1085"/>
<dbReference type="HOGENOM" id="CLU_033347_1_2_5"/>
<dbReference type="PhylomeDB" id="P64133"/>
<dbReference type="Proteomes" id="UP000007104">
    <property type="component" value="Chromosome II"/>
</dbReference>
<dbReference type="GO" id="GO:0005829">
    <property type="term" value="C:cytosol"/>
    <property type="evidence" value="ECO:0007669"/>
    <property type="project" value="TreeGrafter"/>
</dbReference>
<dbReference type="GO" id="GO:0004479">
    <property type="term" value="F:methionyl-tRNA formyltransferase activity"/>
    <property type="evidence" value="ECO:0007669"/>
    <property type="project" value="UniProtKB-UniRule"/>
</dbReference>
<dbReference type="CDD" id="cd08646">
    <property type="entry name" value="FMT_core_Met-tRNA-FMT_N"/>
    <property type="match status" value="1"/>
</dbReference>
<dbReference type="CDD" id="cd08704">
    <property type="entry name" value="Met_tRNA_FMT_C"/>
    <property type="match status" value="1"/>
</dbReference>
<dbReference type="FunFam" id="3.40.50.12230:FF:000001">
    <property type="entry name" value="Methionyl-tRNA formyltransferase"/>
    <property type="match status" value="1"/>
</dbReference>
<dbReference type="Gene3D" id="3.10.25.10">
    <property type="entry name" value="Formyl transferase, C-terminal domain"/>
    <property type="match status" value="1"/>
</dbReference>
<dbReference type="Gene3D" id="3.40.50.170">
    <property type="entry name" value="Formyl transferase, N-terminal domain"/>
    <property type="match status" value="1"/>
</dbReference>
<dbReference type="HAMAP" id="MF_00182">
    <property type="entry name" value="Formyl_trans"/>
    <property type="match status" value="1"/>
</dbReference>
<dbReference type="InterPro" id="IPR005794">
    <property type="entry name" value="Fmt"/>
</dbReference>
<dbReference type="InterPro" id="IPR005793">
    <property type="entry name" value="Formyl_trans_C"/>
</dbReference>
<dbReference type="InterPro" id="IPR037022">
    <property type="entry name" value="Formyl_trans_C_sf"/>
</dbReference>
<dbReference type="InterPro" id="IPR002376">
    <property type="entry name" value="Formyl_transf_N"/>
</dbReference>
<dbReference type="InterPro" id="IPR036477">
    <property type="entry name" value="Formyl_transf_N_sf"/>
</dbReference>
<dbReference type="InterPro" id="IPR011034">
    <property type="entry name" value="Formyl_transferase-like_C_sf"/>
</dbReference>
<dbReference type="InterPro" id="IPR001555">
    <property type="entry name" value="GART_AS"/>
</dbReference>
<dbReference type="InterPro" id="IPR044135">
    <property type="entry name" value="Met-tRNA-FMT_C"/>
</dbReference>
<dbReference type="InterPro" id="IPR041711">
    <property type="entry name" value="Met-tRNA-FMT_N"/>
</dbReference>
<dbReference type="NCBIfam" id="TIGR00460">
    <property type="entry name" value="fmt"/>
    <property type="match status" value="1"/>
</dbReference>
<dbReference type="PANTHER" id="PTHR11138">
    <property type="entry name" value="METHIONYL-TRNA FORMYLTRANSFERASE"/>
    <property type="match status" value="1"/>
</dbReference>
<dbReference type="PANTHER" id="PTHR11138:SF5">
    <property type="entry name" value="METHIONYL-TRNA FORMYLTRANSFERASE, MITOCHONDRIAL"/>
    <property type="match status" value="1"/>
</dbReference>
<dbReference type="Pfam" id="PF02911">
    <property type="entry name" value="Formyl_trans_C"/>
    <property type="match status" value="1"/>
</dbReference>
<dbReference type="Pfam" id="PF00551">
    <property type="entry name" value="Formyl_trans_N"/>
    <property type="match status" value="1"/>
</dbReference>
<dbReference type="SUPFAM" id="SSF50486">
    <property type="entry name" value="FMT C-terminal domain-like"/>
    <property type="match status" value="1"/>
</dbReference>
<dbReference type="SUPFAM" id="SSF53328">
    <property type="entry name" value="Formyltransferase"/>
    <property type="match status" value="1"/>
</dbReference>
<dbReference type="PROSITE" id="PS00373">
    <property type="entry name" value="GART"/>
    <property type="match status" value="1"/>
</dbReference>
<accession>P64133</accession>
<accession>G0KE40</accession>
<accession>Q8YDB3</accession>
<gene>
    <name evidence="1" type="primary">fmt</name>
    <name type="ordered locus">BRA1034</name>
    <name type="ordered locus">BS1330_II1026</name>
</gene>
<feature type="chain" id="PRO_0000082932" description="Methionyl-tRNA formyltransferase">
    <location>
        <begin position="1"/>
        <end position="306"/>
    </location>
</feature>
<feature type="binding site" evidence="1">
    <location>
        <begin position="110"/>
        <end position="113"/>
    </location>
    <ligand>
        <name>(6S)-5,6,7,8-tetrahydrofolate</name>
        <dbReference type="ChEBI" id="CHEBI:57453"/>
    </ligand>
</feature>
<keyword id="KW-0648">Protein biosynthesis</keyword>
<keyword id="KW-0808">Transferase</keyword>
<comment type="function">
    <text evidence="1">Attaches a formyl group to the free amino group of methionyl-tRNA(fMet). The formyl group appears to play a dual role in the initiator identity of N-formylmethionyl-tRNA by promoting its recognition by IF2 and preventing the misappropriation of this tRNA by the elongation apparatus.</text>
</comment>
<comment type="catalytic activity">
    <reaction evidence="1">
        <text>L-methionyl-tRNA(fMet) + (6R)-10-formyltetrahydrofolate = N-formyl-L-methionyl-tRNA(fMet) + (6S)-5,6,7,8-tetrahydrofolate + H(+)</text>
        <dbReference type="Rhea" id="RHEA:24380"/>
        <dbReference type="Rhea" id="RHEA-COMP:9952"/>
        <dbReference type="Rhea" id="RHEA-COMP:9953"/>
        <dbReference type="ChEBI" id="CHEBI:15378"/>
        <dbReference type="ChEBI" id="CHEBI:57453"/>
        <dbReference type="ChEBI" id="CHEBI:78530"/>
        <dbReference type="ChEBI" id="CHEBI:78844"/>
        <dbReference type="ChEBI" id="CHEBI:195366"/>
        <dbReference type="EC" id="2.1.2.9"/>
    </reaction>
</comment>
<comment type="similarity">
    <text evidence="1">Belongs to the Fmt family.</text>
</comment>